<comment type="function">
    <text evidence="1">Condensation of UDP-2,3-diacylglucosamine and 2,3-diacylglucosamine-1-phosphate to form lipid A disaccharide, a precursor of lipid A, a phosphorylated glycolipid that anchors the lipopolysaccharide to the outer membrane of the cell.</text>
</comment>
<comment type="catalytic activity">
    <reaction evidence="1">
        <text>a lipid X + a UDP-2-N,3-O-bis[(3R)-3-hydroxyacyl]-alpha-D-glucosamine = a lipid A disaccharide + UDP + H(+)</text>
        <dbReference type="Rhea" id="RHEA:67828"/>
        <dbReference type="ChEBI" id="CHEBI:15378"/>
        <dbReference type="ChEBI" id="CHEBI:58223"/>
        <dbReference type="ChEBI" id="CHEBI:137748"/>
        <dbReference type="ChEBI" id="CHEBI:176338"/>
        <dbReference type="ChEBI" id="CHEBI:176343"/>
        <dbReference type="EC" id="2.4.1.182"/>
    </reaction>
</comment>
<comment type="pathway">
    <text evidence="1">Bacterial outer membrane biogenesis; LPS lipid A biosynthesis.</text>
</comment>
<comment type="similarity">
    <text evidence="1">Belongs to the LpxB family.</text>
</comment>
<gene>
    <name evidence="1" type="primary">lpxB</name>
    <name type="ordered locus">FTM_0330</name>
</gene>
<proteinExistence type="inferred from homology"/>
<accession>B2SFX3</accession>
<reference key="1">
    <citation type="journal article" date="2009" name="PLoS Pathog.">
        <title>Molecular evolutionary consequences of niche restriction in Francisella tularensis, a facultative intracellular pathogen.</title>
        <authorList>
            <person name="Larsson P."/>
            <person name="Elfsmark D."/>
            <person name="Svensson K."/>
            <person name="Wikstroem P."/>
            <person name="Forsman M."/>
            <person name="Brettin T."/>
            <person name="Keim P."/>
            <person name="Johansson A."/>
        </authorList>
    </citation>
    <scope>NUCLEOTIDE SEQUENCE [LARGE SCALE GENOMIC DNA]</scope>
    <source>
        <strain>FSC147</strain>
    </source>
</reference>
<organism>
    <name type="scientific">Francisella tularensis subsp. mediasiatica (strain FSC147)</name>
    <dbReference type="NCBI Taxonomy" id="441952"/>
    <lineage>
        <taxon>Bacteria</taxon>
        <taxon>Pseudomonadati</taxon>
        <taxon>Pseudomonadota</taxon>
        <taxon>Gammaproteobacteria</taxon>
        <taxon>Thiotrichales</taxon>
        <taxon>Francisellaceae</taxon>
        <taxon>Francisella</taxon>
    </lineage>
</organism>
<evidence type="ECO:0000255" key="1">
    <source>
        <dbReference type="HAMAP-Rule" id="MF_00392"/>
    </source>
</evidence>
<protein>
    <recommendedName>
        <fullName evidence="1">Lipid-A-disaccharide synthase</fullName>
        <ecNumber evidence="1">2.4.1.182</ecNumber>
    </recommendedName>
</protein>
<keyword id="KW-0328">Glycosyltransferase</keyword>
<keyword id="KW-0441">Lipid A biosynthesis</keyword>
<keyword id="KW-0444">Lipid biosynthesis</keyword>
<keyword id="KW-0443">Lipid metabolism</keyword>
<keyword id="KW-0808">Transferase</keyword>
<feature type="chain" id="PRO_1000191486" description="Lipid-A-disaccharide synthase">
    <location>
        <begin position="1"/>
        <end position="380"/>
    </location>
</feature>
<sequence>MRIGIVAGELSGDQLGGTLVEALKQKYPNAIIEGIGGPKMAAAGFKSLYPMDALSLIGFLEIISKGLRILSIRRKIINYFKQNKPDIFIGIDAPDFNLTVEKELRSAGIKTIHYVSPKIWVWREYRIKKIRKATDKILAILPFETEYYKNRHKFEAIYVGHPLAKNIPIHIDRAKYRDKLGLKGSSLPILSVLPGSRTTEVSRLLPLFLLALQKLVDAGYKFKAIMPLAKPSLKPLFAKYKEQIDSLGIEVFETNSHDVLKASDLSLLASGTATLEAMLCKLPMVVGYKLSWLSALIGRMLIGNHSYWAFPNILHKNEIIKELIQEDCTVDNLFSELKRLFDDKRRNDYIVEEFEKIHKEMVIDTESKIIQVLDTMIEKS</sequence>
<dbReference type="EC" id="2.4.1.182" evidence="1"/>
<dbReference type="EMBL" id="CP000915">
    <property type="protein sequence ID" value="ACD30383.1"/>
    <property type="molecule type" value="Genomic_DNA"/>
</dbReference>
<dbReference type="SMR" id="B2SFX3"/>
<dbReference type="CAZy" id="GT19">
    <property type="family name" value="Glycosyltransferase Family 19"/>
</dbReference>
<dbReference type="KEGG" id="ftm:FTM_0330"/>
<dbReference type="HOGENOM" id="CLU_036577_3_0_6"/>
<dbReference type="UniPathway" id="UPA00973"/>
<dbReference type="GO" id="GO:0016020">
    <property type="term" value="C:membrane"/>
    <property type="evidence" value="ECO:0007669"/>
    <property type="project" value="GOC"/>
</dbReference>
<dbReference type="GO" id="GO:0008915">
    <property type="term" value="F:lipid-A-disaccharide synthase activity"/>
    <property type="evidence" value="ECO:0007669"/>
    <property type="project" value="UniProtKB-UniRule"/>
</dbReference>
<dbReference type="GO" id="GO:0005543">
    <property type="term" value="F:phospholipid binding"/>
    <property type="evidence" value="ECO:0007669"/>
    <property type="project" value="TreeGrafter"/>
</dbReference>
<dbReference type="GO" id="GO:0009245">
    <property type="term" value="P:lipid A biosynthetic process"/>
    <property type="evidence" value="ECO:0007669"/>
    <property type="project" value="UniProtKB-UniRule"/>
</dbReference>
<dbReference type="CDD" id="cd01635">
    <property type="entry name" value="Glycosyltransferase_GTB-type"/>
    <property type="match status" value="1"/>
</dbReference>
<dbReference type="Gene3D" id="3.40.50.2000">
    <property type="entry name" value="Glycogen Phosphorylase B"/>
    <property type="match status" value="2"/>
</dbReference>
<dbReference type="HAMAP" id="MF_00392">
    <property type="entry name" value="LpxB"/>
    <property type="match status" value="1"/>
</dbReference>
<dbReference type="InterPro" id="IPR003835">
    <property type="entry name" value="Glyco_trans_19"/>
</dbReference>
<dbReference type="NCBIfam" id="TIGR00215">
    <property type="entry name" value="lpxB"/>
    <property type="match status" value="1"/>
</dbReference>
<dbReference type="PANTHER" id="PTHR30372">
    <property type="entry name" value="LIPID-A-DISACCHARIDE SYNTHASE"/>
    <property type="match status" value="1"/>
</dbReference>
<dbReference type="PANTHER" id="PTHR30372:SF4">
    <property type="entry name" value="LIPID-A-DISACCHARIDE SYNTHASE, MITOCHONDRIAL-RELATED"/>
    <property type="match status" value="1"/>
</dbReference>
<dbReference type="Pfam" id="PF02684">
    <property type="entry name" value="LpxB"/>
    <property type="match status" value="1"/>
</dbReference>
<dbReference type="SUPFAM" id="SSF53756">
    <property type="entry name" value="UDP-Glycosyltransferase/glycogen phosphorylase"/>
    <property type="match status" value="1"/>
</dbReference>
<name>LPXB_FRATM</name>